<keyword id="KW-0378">Hydrolase</keyword>
<keyword id="KW-0408">Iron</keyword>
<keyword id="KW-0479">Metal-binding</keyword>
<keyword id="KW-0648">Protein biosynthesis</keyword>
<keyword id="KW-1185">Reference proteome</keyword>
<sequence>MILPVFLYGQPVLRKEAEDVPKDYPDLKQLVANMFETMYNADGVGLAAPQVGLSIRLVVIDGDVMGDDFPECKGFKRALINPEFLERSEEEIAMEEGCLSLPGIHEKVSRSKTVRVRYWDENWEEHEEVVEGFAARIVQHECEHLTGHVFIDNVSAIRRQLNKGKLNSIIKGTVRCSYRAKAVGK</sequence>
<reference key="1">
    <citation type="journal article" date="2007" name="PLoS Biol.">
        <title>Evolution of symbiotic bacteria in the distal human intestine.</title>
        <authorList>
            <person name="Xu J."/>
            <person name="Mahowald M.A."/>
            <person name="Ley R.E."/>
            <person name="Lozupone C.A."/>
            <person name="Hamady M."/>
            <person name="Martens E.C."/>
            <person name="Henrissat B."/>
            <person name="Coutinho P.M."/>
            <person name="Minx P."/>
            <person name="Latreille P."/>
            <person name="Cordum H."/>
            <person name="Van Brunt A."/>
            <person name="Kim K."/>
            <person name="Fulton R.S."/>
            <person name="Fulton L.A."/>
            <person name="Clifton S.W."/>
            <person name="Wilson R.K."/>
            <person name="Knight R.D."/>
            <person name="Gordon J.I."/>
        </authorList>
    </citation>
    <scope>NUCLEOTIDE SEQUENCE [LARGE SCALE GENOMIC DNA]</scope>
    <source>
        <strain>ATCC 8503 / DSM 20701 / CIP 104284 / JCM 5825 / NCTC 11152</strain>
    </source>
</reference>
<feature type="chain" id="PRO_0000301073" description="Peptide deformylase">
    <location>
        <begin position="1"/>
        <end position="185"/>
    </location>
</feature>
<feature type="active site" evidence="1">
    <location>
        <position position="141"/>
    </location>
</feature>
<feature type="binding site" evidence="1">
    <location>
        <position position="98"/>
    </location>
    <ligand>
        <name>Fe cation</name>
        <dbReference type="ChEBI" id="CHEBI:24875"/>
    </ligand>
</feature>
<feature type="binding site" evidence="1">
    <location>
        <position position="140"/>
    </location>
    <ligand>
        <name>Fe cation</name>
        <dbReference type="ChEBI" id="CHEBI:24875"/>
    </ligand>
</feature>
<feature type="binding site" evidence="1">
    <location>
        <position position="144"/>
    </location>
    <ligand>
        <name>Fe cation</name>
        <dbReference type="ChEBI" id="CHEBI:24875"/>
    </ligand>
</feature>
<evidence type="ECO:0000255" key="1">
    <source>
        <dbReference type="HAMAP-Rule" id="MF_00163"/>
    </source>
</evidence>
<protein>
    <recommendedName>
        <fullName evidence="1">Peptide deformylase</fullName>
        <shortName evidence="1">PDF</shortName>
        <ecNumber evidence="1">3.5.1.88</ecNumber>
    </recommendedName>
    <alternativeName>
        <fullName evidence="1">Polypeptide deformylase</fullName>
    </alternativeName>
</protein>
<gene>
    <name evidence="1" type="primary">def</name>
    <name type="ordered locus">BDI_0656</name>
</gene>
<organism>
    <name type="scientific">Parabacteroides distasonis (strain ATCC 8503 / DSM 20701 / CIP 104284 / JCM 5825 / NCTC 11152)</name>
    <dbReference type="NCBI Taxonomy" id="435591"/>
    <lineage>
        <taxon>Bacteria</taxon>
        <taxon>Pseudomonadati</taxon>
        <taxon>Bacteroidota</taxon>
        <taxon>Bacteroidia</taxon>
        <taxon>Bacteroidales</taxon>
        <taxon>Tannerellaceae</taxon>
        <taxon>Parabacteroides</taxon>
    </lineage>
</organism>
<dbReference type="EC" id="3.5.1.88" evidence="1"/>
<dbReference type="EMBL" id="CP000140">
    <property type="protein sequence ID" value="ABR42432.1"/>
    <property type="molecule type" value="Genomic_DNA"/>
</dbReference>
<dbReference type="RefSeq" id="WP_005857695.1">
    <property type="nucleotide sequence ID" value="NZ_LR215978.1"/>
</dbReference>
<dbReference type="SMR" id="A6L9R8"/>
<dbReference type="STRING" id="435591.BDI_0656"/>
<dbReference type="PaxDb" id="435591-BDI_0656"/>
<dbReference type="KEGG" id="pdi:BDI_0656"/>
<dbReference type="eggNOG" id="COG0242">
    <property type="taxonomic scope" value="Bacteria"/>
</dbReference>
<dbReference type="HOGENOM" id="CLU_061901_2_0_10"/>
<dbReference type="BioCyc" id="PDIS435591:G1G5A-673-MONOMER"/>
<dbReference type="Proteomes" id="UP000000566">
    <property type="component" value="Chromosome"/>
</dbReference>
<dbReference type="GO" id="GO:0046872">
    <property type="term" value="F:metal ion binding"/>
    <property type="evidence" value="ECO:0007669"/>
    <property type="project" value="UniProtKB-KW"/>
</dbReference>
<dbReference type="GO" id="GO:0042586">
    <property type="term" value="F:peptide deformylase activity"/>
    <property type="evidence" value="ECO:0007669"/>
    <property type="project" value="UniProtKB-UniRule"/>
</dbReference>
<dbReference type="GO" id="GO:0043686">
    <property type="term" value="P:co-translational protein modification"/>
    <property type="evidence" value="ECO:0007669"/>
    <property type="project" value="TreeGrafter"/>
</dbReference>
<dbReference type="GO" id="GO:0006412">
    <property type="term" value="P:translation"/>
    <property type="evidence" value="ECO:0007669"/>
    <property type="project" value="UniProtKB-UniRule"/>
</dbReference>
<dbReference type="CDD" id="cd00487">
    <property type="entry name" value="Pep_deformylase"/>
    <property type="match status" value="1"/>
</dbReference>
<dbReference type="Gene3D" id="3.90.45.10">
    <property type="entry name" value="Peptide deformylase"/>
    <property type="match status" value="1"/>
</dbReference>
<dbReference type="HAMAP" id="MF_00163">
    <property type="entry name" value="Pep_deformylase"/>
    <property type="match status" value="1"/>
</dbReference>
<dbReference type="InterPro" id="IPR023635">
    <property type="entry name" value="Peptide_deformylase"/>
</dbReference>
<dbReference type="InterPro" id="IPR036821">
    <property type="entry name" value="Peptide_deformylase_sf"/>
</dbReference>
<dbReference type="NCBIfam" id="TIGR00079">
    <property type="entry name" value="pept_deformyl"/>
    <property type="match status" value="1"/>
</dbReference>
<dbReference type="NCBIfam" id="NF001159">
    <property type="entry name" value="PRK00150.1-3"/>
    <property type="match status" value="1"/>
</dbReference>
<dbReference type="PANTHER" id="PTHR10458">
    <property type="entry name" value="PEPTIDE DEFORMYLASE"/>
    <property type="match status" value="1"/>
</dbReference>
<dbReference type="PANTHER" id="PTHR10458:SF22">
    <property type="entry name" value="PEPTIDE DEFORMYLASE"/>
    <property type="match status" value="1"/>
</dbReference>
<dbReference type="Pfam" id="PF01327">
    <property type="entry name" value="Pep_deformylase"/>
    <property type="match status" value="1"/>
</dbReference>
<dbReference type="PIRSF" id="PIRSF004749">
    <property type="entry name" value="Pep_def"/>
    <property type="match status" value="1"/>
</dbReference>
<dbReference type="PRINTS" id="PR01576">
    <property type="entry name" value="PDEFORMYLASE"/>
</dbReference>
<dbReference type="SUPFAM" id="SSF56420">
    <property type="entry name" value="Peptide deformylase"/>
    <property type="match status" value="1"/>
</dbReference>
<proteinExistence type="inferred from homology"/>
<name>DEF_PARD8</name>
<comment type="function">
    <text evidence="1">Removes the formyl group from the N-terminal Met of newly synthesized proteins. Requires at least a dipeptide for an efficient rate of reaction. N-terminal L-methionine is a prerequisite for activity but the enzyme has broad specificity at other positions.</text>
</comment>
<comment type="catalytic activity">
    <reaction evidence="1">
        <text>N-terminal N-formyl-L-methionyl-[peptide] + H2O = N-terminal L-methionyl-[peptide] + formate</text>
        <dbReference type="Rhea" id="RHEA:24420"/>
        <dbReference type="Rhea" id="RHEA-COMP:10639"/>
        <dbReference type="Rhea" id="RHEA-COMP:10640"/>
        <dbReference type="ChEBI" id="CHEBI:15377"/>
        <dbReference type="ChEBI" id="CHEBI:15740"/>
        <dbReference type="ChEBI" id="CHEBI:49298"/>
        <dbReference type="ChEBI" id="CHEBI:64731"/>
        <dbReference type="EC" id="3.5.1.88"/>
    </reaction>
</comment>
<comment type="cofactor">
    <cofactor evidence="1">
        <name>Fe(2+)</name>
        <dbReference type="ChEBI" id="CHEBI:29033"/>
    </cofactor>
    <text evidence="1">Binds 1 Fe(2+) ion.</text>
</comment>
<comment type="similarity">
    <text evidence="1">Belongs to the polypeptide deformylase family.</text>
</comment>
<accession>A6L9R8</accession>